<name>F16PC_CLONN</name>
<feature type="chain" id="PRO_0000363088" description="Fructose-1,6-bisphosphatase class 3">
    <location>
        <begin position="1"/>
        <end position="665"/>
    </location>
</feature>
<dbReference type="EC" id="3.1.3.11" evidence="1"/>
<dbReference type="EMBL" id="CP000382">
    <property type="protein sequence ID" value="ABK61346.1"/>
    <property type="molecule type" value="Genomic_DNA"/>
</dbReference>
<dbReference type="RefSeq" id="WP_011721601.1">
    <property type="nucleotide sequence ID" value="NC_008593.1"/>
</dbReference>
<dbReference type="STRING" id="386415.NT01CX_1512"/>
<dbReference type="KEGG" id="cno:NT01CX_1512"/>
<dbReference type="PATRIC" id="fig|386415.7.peg.619"/>
<dbReference type="eggNOG" id="COG3855">
    <property type="taxonomic scope" value="Bacteria"/>
</dbReference>
<dbReference type="HOGENOM" id="CLU_028392_2_0_9"/>
<dbReference type="UniPathway" id="UPA00138"/>
<dbReference type="Proteomes" id="UP000008220">
    <property type="component" value="Chromosome"/>
</dbReference>
<dbReference type="GO" id="GO:0042132">
    <property type="term" value="F:fructose 1,6-bisphosphate 1-phosphatase activity"/>
    <property type="evidence" value="ECO:0007669"/>
    <property type="project" value="UniProtKB-UniRule"/>
</dbReference>
<dbReference type="GO" id="GO:0006094">
    <property type="term" value="P:gluconeogenesis"/>
    <property type="evidence" value="ECO:0007669"/>
    <property type="project" value="UniProtKB-UniRule"/>
</dbReference>
<dbReference type="HAMAP" id="MF_01854">
    <property type="entry name" value="FBPase_class3"/>
    <property type="match status" value="1"/>
</dbReference>
<dbReference type="InterPro" id="IPR009164">
    <property type="entry name" value="FBPtase_class3"/>
</dbReference>
<dbReference type="InterPro" id="IPR029052">
    <property type="entry name" value="Metallo-depent_PP-like"/>
</dbReference>
<dbReference type="Pfam" id="PF06874">
    <property type="entry name" value="FBPase_2"/>
    <property type="match status" value="1"/>
</dbReference>
<dbReference type="PIRSF" id="PIRSF000906">
    <property type="entry name" value="FBPtase_Bacill"/>
    <property type="match status" value="1"/>
</dbReference>
<dbReference type="SUPFAM" id="SSF56300">
    <property type="entry name" value="Metallo-dependent phosphatases"/>
    <property type="match status" value="1"/>
</dbReference>
<accession>A0PYZ1</accession>
<gene>
    <name evidence="1" type="primary">fbp</name>
    <name type="ordered locus">NT01CX_1512</name>
</gene>
<reference key="1">
    <citation type="journal article" date="2006" name="Nat. Biotechnol.">
        <title>The genome and transcriptomes of the anti-tumor agent Clostridium novyi-NT.</title>
        <authorList>
            <person name="Bettegowda C."/>
            <person name="Huang X."/>
            <person name="Lin J."/>
            <person name="Cheong I."/>
            <person name="Kohli M."/>
            <person name="Szabo S.A."/>
            <person name="Zhang X."/>
            <person name="Diaz L.A. Jr."/>
            <person name="Velculescu V.E."/>
            <person name="Parmigiani G."/>
            <person name="Kinzler K.W."/>
            <person name="Vogelstein B."/>
            <person name="Zhou S."/>
        </authorList>
    </citation>
    <scope>NUCLEOTIDE SEQUENCE [LARGE SCALE GENOMIC DNA]</scope>
    <source>
        <strain>NT</strain>
    </source>
</reference>
<keyword id="KW-0119">Carbohydrate metabolism</keyword>
<keyword id="KW-0378">Hydrolase</keyword>
<keyword id="KW-0464">Manganese</keyword>
<keyword id="KW-1185">Reference proteome</keyword>
<protein>
    <recommendedName>
        <fullName evidence="1">Fructose-1,6-bisphosphatase class 3</fullName>
        <shortName evidence="1">FBPase class 3</shortName>
        <ecNumber evidence="1">3.1.3.11</ecNumber>
    </recommendedName>
    <alternativeName>
        <fullName evidence="1">D-fructose-1,6-bisphosphate 1-phosphohydrolase class 3</fullName>
    </alternativeName>
</protein>
<evidence type="ECO:0000255" key="1">
    <source>
        <dbReference type="HAMAP-Rule" id="MF_01854"/>
    </source>
</evidence>
<organism>
    <name type="scientific">Clostridium novyi (strain NT)</name>
    <dbReference type="NCBI Taxonomy" id="386415"/>
    <lineage>
        <taxon>Bacteria</taxon>
        <taxon>Bacillati</taxon>
        <taxon>Bacillota</taxon>
        <taxon>Clostridia</taxon>
        <taxon>Eubacteriales</taxon>
        <taxon>Clostridiaceae</taxon>
        <taxon>Clostridium</taxon>
    </lineage>
</organism>
<comment type="catalytic activity">
    <reaction evidence="1">
        <text>beta-D-fructose 1,6-bisphosphate + H2O = beta-D-fructose 6-phosphate + phosphate</text>
        <dbReference type="Rhea" id="RHEA:11064"/>
        <dbReference type="ChEBI" id="CHEBI:15377"/>
        <dbReference type="ChEBI" id="CHEBI:32966"/>
        <dbReference type="ChEBI" id="CHEBI:43474"/>
        <dbReference type="ChEBI" id="CHEBI:57634"/>
        <dbReference type="EC" id="3.1.3.11"/>
    </reaction>
</comment>
<comment type="cofactor">
    <cofactor evidence="1">
        <name>Mn(2+)</name>
        <dbReference type="ChEBI" id="CHEBI:29035"/>
    </cofactor>
</comment>
<comment type="pathway">
    <text evidence="1">Carbohydrate biosynthesis; gluconeogenesis.</text>
</comment>
<comment type="similarity">
    <text evidence="1">Belongs to the FBPase class 3 family.</text>
</comment>
<sequence>MTFCDENNLDLIKKDLRYLKLLANQYPNISSASTEIVNLEAILNLPKSTEHFLSDIHGEYESFTHVLKNASGVIKRKIDDVFGNSLRDNEKLTLATVIYYPEQKLELIKQSEKDLSDWYKITLYRLIELCRVVSSKYTRSKVRKALPHDFAYIIEELLHEHDGTINKHEYYNGIVSTIIDIDRAPEFITAISKVIQRLVVDRLHIIGDIYDRGPGAEIIMEELMKHHSVDIQWGNHDILWMGAAAGSEACICNVLRISLRYANLNTIEDGYGINLLPLATFAMDVYENDPCNSFIPKTINKELTQNELNLISKMHKAIAIIQFKLQGQIIKNHPEFKMDDQLLLDKINYEKGTIDLDGHIYKLNDTFFPTVDPKDPYKLTENEDDLIKKLTRSFVNSEKLQRHIRFMYSKGSMYLVYNSNLLYHGCVPLNEDGTFKEITIDGVRYSGKSLLDKFDSLAREAFFFKNGSSAKRFALDMMWYLWCGPNSPEFGKLRMTTLERYFIDDKGTHIEYRNPYYKYRSNEKVVTNILKEFGLDPDCSHVINGHIPVKTKAGENPIKANGKLLVIDGGFCRAYQPETGIAGYTLIYNSYGLLLSSHEPFSSIRKAIEEEKDILSSTIILEQVVSRKRVADTDIGKELKKQIAELKMLLIAYRKGLIKEQDSKS</sequence>
<proteinExistence type="inferred from homology"/>